<sequence>MSKVTVDLQMAFDGTGVPSKTLFEAWAEAAWQGENPTEVTIRIVDNDESRELNHQYRGKDKPTNVLSFPFEAPAGITVPLAGDLVICAPVVEQEAREQNKDAVAHWAHMVVHGMLHLQGYDHIEVNEAEVMEALEIRLLAQLGFANPYEAEETEPDS</sequence>
<comment type="function">
    <text evidence="1">Single strand-specific metallo-endoribonuclease involved in late-stage 70S ribosome quality control and in maturation of the 3' terminus of the 16S rRNA.</text>
</comment>
<comment type="cofactor">
    <cofactor evidence="1">
        <name>Zn(2+)</name>
        <dbReference type="ChEBI" id="CHEBI:29105"/>
    </cofactor>
    <text evidence="1">Binds 1 zinc ion.</text>
</comment>
<comment type="subcellular location">
    <subcellularLocation>
        <location evidence="1">Cytoplasm</location>
    </subcellularLocation>
</comment>
<comment type="similarity">
    <text evidence="1">Belongs to the endoribonuclease YbeY family.</text>
</comment>
<evidence type="ECO:0000255" key="1">
    <source>
        <dbReference type="HAMAP-Rule" id="MF_00009"/>
    </source>
</evidence>
<accession>A1U496</accession>
<gene>
    <name evidence="1" type="primary">ybeY</name>
    <name type="ordered locus">Maqu_2740</name>
</gene>
<reference key="1">
    <citation type="journal article" date="2011" name="Appl. Environ. Microbiol.">
        <title>Genomic potential of Marinobacter aquaeolei, a biogeochemical 'opportunitroph'.</title>
        <authorList>
            <person name="Singer E."/>
            <person name="Webb E.A."/>
            <person name="Nelson W.C."/>
            <person name="Heidelberg J.F."/>
            <person name="Ivanova N."/>
            <person name="Pati A."/>
            <person name="Edwards K.J."/>
        </authorList>
    </citation>
    <scope>NUCLEOTIDE SEQUENCE [LARGE SCALE GENOMIC DNA]</scope>
    <source>
        <strain>ATCC 700491 / DSM 11845 / VT8</strain>
    </source>
</reference>
<proteinExistence type="inferred from homology"/>
<organism>
    <name type="scientific">Marinobacter nauticus (strain ATCC 700491 / DSM 11845 / VT8)</name>
    <name type="common">Marinobacter aquaeolei</name>
    <dbReference type="NCBI Taxonomy" id="351348"/>
    <lineage>
        <taxon>Bacteria</taxon>
        <taxon>Pseudomonadati</taxon>
        <taxon>Pseudomonadota</taxon>
        <taxon>Gammaproteobacteria</taxon>
        <taxon>Pseudomonadales</taxon>
        <taxon>Marinobacteraceae</taxon>
        <taxon>Marinobacter</taxon>
    </lineage>
</organism>
<keyword id="KW-0963">Cytoplasm</keyword>
<keyword id="KW-0255">Endonuclease</keyword>
<keyword id="KW-0378">Hydrolase</keyword>
<keyword id="KW-0479">Metal-binding</keyword>
<keyword id="KW-0540">Nuclease</keyword>
<keyword id="KW-0690">Ribosome biogenesis</keyword>
<keyword id="KW-0698">rRNA processing</keyword>
<keyword id="KW-0862">Zinc</keyword>
<dbReference type="EC" id="3.1.-.-" evidence="1"/>
<dbReference type="EMBL" id="CP000514">
    <property type="protein sequence ID" value="ABM19815.1"/>
    <property type="molecule type" value="Genomic_DNA"/>
</dbReference>
<dbReference type="RefSeq" id="WP_011786185.1">
    <property type="nucleotide sequence ID" value="NC_008740.1"/>
</dbReference>
<dbReference type="SMR" id="A1U496"/>
<dbReference type="STRING" id="351348.Maqu_2740"/>
<dbReference type="KEGG" id="maq:Maqu_2740"/>
<dbReference type="eggNOG" id="COG0319">
    <property type="taxonomic scope" value="Bacteria"/>
</dbReference>
<dbReference type="HOGENOM" id="CLU_106710_0_1_6"/>
<dbReference type="OrthoDB" id="9807740at2"/>
<dbReference type="Proteomes" id="UP000000998">
    <property type="component" value="Chromosome"/>
</dbReference>
<dbReference type="GO" id="GO:0005737">
    <property type="term" value="C:cytoplasm"/>
    <property type="evidence" value="ECO:0007669"/>
    <property type="project" value="UniProtKB-SubCell"/>
</dbReference>
<dbReference type="GO" id="GO:0004222">
    <property type="term" value="F:metalloendopeptidase activity"/>
    <property type="evidence" value="ECO:0007669"/>
    <property type="project" value="InterPro"/>
</dbReference>
<dbReference type="GO" id="GO:0004521">
    <property type="term" value="F:RNA endonuclease activity"/>
    <property type="evidence" value="ECO:0007669"/>
    <property type="project" value="UniProtKB-UniRule"/>
</dbReference>
<dbReference type="GO" id="GO:0008270">
    <property type="term" value="F:zinc ion binding"/>
    <property type="evidence" value="ECO:0007669"/>
    <property type="project" value="UniProtKB-UniRule"/>
</dbReference>
<dbReference type="GO" id="GO:0006364">
    <property type="term" value="P:rRNA processing"/>
    <property type="evidence" value="ECO:0007669"/>
    <property type="project" value="UniProtKB-UniRule"/>
</dbReference>
<dbReference type="Gene3D" id="3.40.390.30">
    <property type="entry name" value="Metalloproteases ('zincins'), catalytic domain"/>
    <property type="match status" value="1"/>
</dbReference>
<dbReference type="HAMAP" id="MF_00009">
    <property type="entry name" value="Endoribonucl_YbeY"/>
    <property type="match status" value="1"/>
</dbReference>
<dbReference type="InterPro" id="IPR023091">
    <property type="entry name" value="MetalPrtase_cat_dom_sf_prd"/>
</dbReference>
<dbReference type="InterPro" id="IPR002036">
    <property type="entry name" value="YbeY"/>
</dbReference>
<dbReference type="InterPro" id="IPR020549">
    <property type="entry name" value="YbeY_CS"/>
</dbReference>
<dbReference type="NCBIfam" id="TIGR00043">
    <property type="entry name" value="rRNA maturation RNase YbeY"/>
    <property type="match status" value="1"/>
</dbReference>
<dbReference type="PANTHER" id="PTHR46986">
    <property type="entry name" value="ENDORIBONUCLEASE YBEY, CHLOROPLASTIC"/>
    <property type="match status" value="1"/>
</dbReference>
<dbReference type="PANTHER" id="PTHR46986:SF1">
    <property type="entry name" value="ENDORIBONUCLEASE YBEY, CHLOROPLASTIC"/>
    <property type="match status" value="1"/>
</dbReference>
<dbReference type="Pfam" id="PF02130">
    <property type="entry name" value="YbeY"/>
    <property type="match status" value="1"/>
</dbReference>
<dbReference type="SUPFAM" id="SSF55486">
    <property type="entry name" value="Metalloproteases ('zincins'), catalytic domain"/>
    <property type="match status" value="1"/>
</dbReference>
<dbReference type="PROSITE" id="PS01306">
    <property type="entry name" value="UPF0054"/>
    <property type="match status" value="1"/>
</dbReference>
<name>YBEY_MARN8</name>
<feature type="chain" id="PRO_0000284239" description="Endoribonuclease YbeY">
    <location>
        <begin position="1"/>
        <end position="157"/>
    </location>
</feature>
<feature type="binding site" evidence="1">
    <location>
        <position position="112"/>
    </location>
    <ligand>
        <name>Zn(2+)</name>
        <dbReference type="ChEBI" id="CHEBI:29105"/>
        <note>catalytic</note>
    </ligand>
</feature>
<feature type="binding site" evidence="1">
    <location>
        <position position="116"/>
    </location>
    <ligand>
        <name>Zn(2+)</name>
        <dbReference type="ChEBI" id="CHEBI:29105"/>
        <note>catalytic</note>
    </ligand>
</feature>
<feature type="binding site" evidence="1">
    <location>
        <position position="122"/>
    </location>
    <ligand>
        <name>Zn(2+)</name>
        <dbReference type="ChEBI" id="CHEBI:29105"/>
        <note>catalytic</note>
    </ligand>
</feature>
<protein>
    <recommendedName>
        <fullName evidence="1">Endoribonuclease YbeY</fullName>
        <ecNumber evidence="1">3.1.-.-</ecNumber>
    </recommendedName>
</protein>